<feature type="signal peptide" evidence="2">
    <location>
        <begin position="1"/>
        <end position="26"/>
    </location>
</feature>
<feature type="chain" id="PRO_0000026715" description="Alkaline proteinase inhibitor">
    <location>
        <begin position="27"/>
        <end position="134"/>
    </location>
</feature>
<feature type="disulfide bond" evidence="1">
    <location>
        <begin position="50"/>
        <end position="73"/>
    </location>
</feature>
<accession>Q7N8R2</accession>
<reference key="1">
    <citation type="journal article" date="2003" name="Nat. Biotechnol.">
        <title>The genome sequence of the entomopathogenic bacterium Photorhabdus luminescens.</title>
        <authorList>
            <person name="Duchaud E."/>
            <person name="Rusniok C."/>
            <person name="Frangeul L."/>
            <person name="Buchrieser C."/>
            <person name="Givaudan A."/>
            <person name="Taourit S."/>
            <person name="Bocs S."/>
            <person name="Boursaux-Eude C."/>
            <person name="Chandler M."/>
            <person name="Charles J.-F."/>
            <person name="Dassa E."/>
            <person name="Derose R."/>
            <person name="Derzelle S."/>
            <person name="Freyssinet G."/>
            <person name="Gaudriault S."/>
            <person name="Medigue C."/>
            <person name="Lanois A."/>
            <person name="Powell K."/>
            <person name="Siguier P."/>
            <person name="Vincent R."/>
            <person name="Wingate V."/>
            <person name="Zouine M."/>
            <person name="Glaser P."/>
            <person name="Boemare N."/>
            <person name="Danchin A."/>
            <person name="Kunst F."/>
        </authorList>
    </citation>
    <scope>NUCLEOTIDE SEQUENCE [LARGE SCALE GENOMIC DNA]</scope>
    <source>
        <strain>DSM 15139 / CIP 105565 / TT01</strain>
    </source>
</reference>
<organism>
    <name type="scientific">Photorhabdus laumondii subsp. laumondii (strain DSM 15139 / CIP 105565 / TT01)</name>
    <name type="common">Photorhabdus luminescens subsp. laumondii</name>
    <dbReference type="NCBI Taxonomy" id="243265"/>
    <lineage>
        <taxon>Bacteria</taxon>
        <taxon>Pseudomonadati</taxon>
        <taxon>Pseudomonadota</taxon>
        <taxon>Gammaproteobacteria</taxon>
        <taxon>Enterobacterales</taxon>
        <taxon>Morganellaceae</taxon>
        <taxon>Photorhabdus</taxon>
    </lineage>
</organism>
<dbReference type="EMBL" id="BX571861">
    <property type="protein sequence ID" value="CAE12951.1"/>
    <property type="molecule type" value="Genomic_DNA"/>
</dbReference>
<dbReference type="RefSeq" id="WP_011145032.1">
    <property type="nucleotide sequence ID" value="NC_005126.1"/>
</dbReference>
<dbReference type="SMR" id="Q7N8R2"/>
<dbReference type="STRING" id="243265.plu0656"/>
<dbReference type="GeneID" id="48846944"/>
<dbReference type="KEGG" id="plu:plu0656"/>
<dbReference type="eggNOG" id="ENOG50334WG">
    <property type="taxonomic scope" value="Bacteria"/>
</dbReference>
<dbReference type="HOGENOM" id="CLU_155270_0_0_6"/>
<dbReference type="Proteomes" id="UP000002514">
    <property type="component" value="Chromosome"/>
</dbReference>
<dbReference type="GO" id="GO:0042597">
    <property type="term" value="C:periplasmic space"/>
    <property type="evidence" value="ECO:0007669"/>
    <property type="project" value="UniProtKB-SubCell"/>
</dbReference>
<dbReference type="GO" id="GO:0008191">
    <property type="term" value="F:metalloendopeptidase inhibitor activity"/>
    <property type="evidence" value="ECO:0007669"/>
    <property type="project" value="InterPro"/>
</dbReference>
<dbReference type="Gene3D" id="2.40.128.10">
    <property type="match status" value="1"/>
</dbReference>
<dbReference type="InterPro" id="IPR022815">
    <property type="entry name" value="Inh"/>
</dbReference>
<dbReference type="InterPro" id="IPR021140">
    <property type="entry name" value="Inh/Omp19"/>
</dbReference>
<dbReference type="InterPro" id="IPR016085">
    <property type="entry name" value="Protease_inh_b-brl_dom"/>
</dbReference>
<dbReference type="Pfam" id="PF02974">
    <property type="entry name" value="Inh"/>
    <property type="match status" value="1"/>
</dbReference>
<dbReference type="PRINTS" id="PR01274">
    <property type="entry name" value="MPTASEINHBTR"/>
</dbReference>
<dbReference type="SUPFAM" id="SSF50882">
    <property type="entry name" value="beta-Barrel protease inhibitors"/>
    <property type="match status" value="1"/>
</dbReference>
<proteinExistence type="inferred from homology"/>
<gene>
    <name type="primary">inh</name>
    <name type="synonym">prtI</name>
    <name type="ordered locus">plu0656</name>
</gene>
<name>INH_PHOLL</name>
<comment type="function">
    <text evidence="1">Inhibitor of the alkaline protease.</text>
</comment>
<comment type="subcellular location">
    <subcellularLocation>
        <location evidence="1">Periplasm</location>
    </subcellularLocation>
</comment>
<comment type="similarity">
    <text evidence="3">Belongs to the protease inhibitor I38 family.</text>
</comment>
<protein>
    <recommendedName>
        <fullName>Alkaline proteinase inhibitor</fullName>
    </recommendedName>
    <alternativeName>
        <fullName>PrtA-specific inhibitor</fullName>
    </alternativeName>
</protein>
<keyword id="KW-1015">Disulfide bond</keyword>
<keyword id="KW-0481">Metalloenzyme inhibitor</keyword>
<keyword id="KW-0483">Metalloprotease inhibitor</keyword>
<keyword id="KW-0574">Periplasm</keyword>
<keyword id="KW-0646">Protease inhibitor</keyword>
<keyword id="KW-1185">Reference proteome</keyword>
<keyword id="KW-0732">Signal</keyword>
<evidence type="ECO:0000250" key="1"/>
<evidence type="ECO:0000255" key="2"/>
<evidence type="ECO:0000305" key="3"/>
<sequence length="134" mass="14760">MVFAAWYLKFAGFVALIFSIIGGSMASSLVLPHASELKGVWQLSDKHQQCDVLLTDHPLPEGSIWSLNGDNDCLAYMFGEVPAGWRPTPDGLTITDEQGSGLAFFAHEPDGWFARFADGRELMIKPNKTSKKNE</sequence>